<evidence type="ECO:0000250" key="1"/>
<evidence type="ECO:0000250" key="2">
    <source>
        <dbReference type="UniProtKB" id="A5H447"/>
    </source>
</evidence>
<evidence type="ECO:0000250" key="3">
    <source>
        <dbReference type="UniProtKB" id="Q04584"/>
    </source>
</evidence>
<evidence type="ECO:0000250" key="4">
    <source>
        <dbReference type="UniProtKB" id="Q15942"/>
    </source>
</evidence>
<evidence type="ECO:0000255" key="5"/>
<evidence type="ECO:0000255" key="6">
    <source>
        <dbReference type="PROSITE-ProRule" id="PRU00125"/>
    </source>
</evidence>
<evidence type="ECO:0000256" key="7">
    <source>
        <dbReference type="SAM" id="MobiDB-lite"/>
    </source>
</evidence>
<evidence type="ECO:0000312" key="8">
    <source>
        <dbReference type="EMBL" id="AAI21256.1"/>
    </source>
</evidence>
<protein>
    <recommendedName>
        <fullName>Zyxin</fullName>
    </recommendedName>
</protein>
<gene>
    <name evidence="3" type="primary">zyx</name>
</gene>
<keyword id="KW-0130">Cell adhesion</keyword>
<keyword id="KW-0965">Cell junction</keyword>
<keyword id="KW-0963">Cytoplasm</keyword>
<keyword id="KW-0206">Cytoskeleton</keyword>
<keyword id="KW-0440">LIM domain</keyword>
<keyword id="KW-0479">Metal-binding</keyword>
<keyword id="KW-1185">Reference proteome</keyword>
<keyword id="KW-0677">Repeat</keyword>
<keyword id="KW-0804">Transcription</keyword>
<keyword id="KW-0805">Transcription regulation</keyword>
<keyword id="KW-0862">Zinc</keyword>
<dbReference type="EMBL" id="BC121255">
    <property type="protein sequence ID" value="AAI21256.1"/>
    <property type="molecule type" value="mRNA"/>
</dbReference>
<dbReference type="RefSeq" id="NP_001072265.1">
    <property type="nucleotide sequence ID" value="NM_001078797.1"/>
</dbReference>
<dbReference type="FunCoup" id="Q0VA45">
    <property type="interactions" value="950"/>
</dbReference>
<dbReference type="DNASU" id="779718"/>
<dbReference type="GeneID" id="779718"/>
<dbReference type="KEGG" id="xtr:779718"/>
<dbReference type="CTD" id="7791"/>
<dbReference type="Xenbase" id="XB-GENE-6453993">
    <property type="gene designation" value="zyx"/>
</dbReference>
<dbReference type="InParanoid" id="Q0VA45"/>
<dbReference type="OMA" id="YAPKCSV"/>
<dbReference type="OrthoDB" id="25414at2759"/>
<dbReference type="Proteomes" id="UP000008143">
    <property type="component" value="Chromosome 7"/>
</dbReference>
<dbReference type="GO" id="GO:0005737">
    <property type="term" value="C:cytoplasm"/>
    <property type="evidence" value="ECO:0007669"/>
    <property type="project" value="UniProtKB-SubCell"/>
</dbReference>
<dbReference type="GO" id="GO:0005925">
    <property type="term" value="C:focal adhesion"/>
    <property type="evidence" value="ECO:0000250"/>
    <property type="project" value="UniProtKB"/>
</dbReference>
<dbReference type="GO" id="GO:0001725">
    <property type="term" value="C:stress fiber"/>
    <property type="evidence" value="ECO:0000250"/>
    <property type="project" value="UniProtKB"/>
</dbReference>
<dbReference type="GO" id="GO:0140297">
    <property type="term" value="F:DNA-binding transcription factor binding"/>
    <property type="evidence" value="ECO:0000250"/>
    <property type="project" value="UniProtKB"/>
</dbReference>
<dbReference type="GO" id="GO:0046872">
    <property type="term" value="F:metal ion binding"/>
    <property type="evidence" value="ECO:0007669"/>
    <property type="project" value="UniProtKB-KW"/>
</dbReference>
<dbReference type="GO" id="GO:0007155">
    <property type="term" value="P:cell adhesion"/>
    <property type="evidence" value="ECO:0007669"/>
    <property type="project" value="UniProtKB-KW"/>
</dbReference>
<dbReference type="GO" id="GO:0006357">
    <property type="term" value="P:regulation of transcription by RNA polymerase II"/>
    <property type="evidence" value="ECO:0000250"/>
    <property type="project" value="UniProtKB"/>
</dbReference>
<dbReference type="CDD" id="cd09349">
    <property type="entry name" value="LIM1_Zyxin"/>
    <property type="match status" value="1"/>
</dbReference>
<dbReference type="CDD" id="cd09435">
    <property type="entry name" value="LIM3_Zyxin"/>
    <property type="match status" value="1"/>
</dbReference>
<dbReference type="FunFam" id="2.10.110.10:FF:000027">
    <property type="entry name" value="lipoma-preferred partner isoform X1"/>
    <property type="match status" value="1"/>
</dbReference>
<dbReference type="FunFam" id="2.10.110.10:FF:000057">
    <property type="entry name" value="Zyxin"/>
    <property type="match status" value="1"/>
</dbReference>
<dbReference type="Gene3D" id="2.10.110.10">
    <property type="entry name" value="Cysteine Rich Protein"/>
    <property type="match status" value="3"/>
</dbReference>
<dbReference type="InterPro" id="IPR001781">
    <property type="entry name" value="Znf_LIM"/>
</dbReference>
<dbReference type="PANTHER" id="PTHR24212:SF1">
    <property type="entry name" value="ZYXIN"/>
    <property type="match status" value="1"/>
</dbReference>
<dbReference type="PANTHER" id="PTHR24212">
    <property type="entry name" value="ZYXIN/TRIP6"/>
    <property type="match status" value="1"/>
</dbReference>
<dbReference type="Pfam" id="PF00412">
    <property type="entry name" value="LIM"/>
    <property type="match status" value="3"/>
</dbReference>
<dbReference type="PRINTS" id="PR01217">
    <property type="entry name" value="PRICHEXTENSN"/>
</dbReference>
<dbReference type="SMART" id="SM00132">
    <property type="entry name" value="LIM"/>
    <property type="match status" value="3"/>
</dbReference>
<dbReference type="SUPFAM" id="SSF57716">
    <property type="entry name" value="Glucocorticoid receptor-like (DNA-binding domain)"/>
    <property type="match status" value="2"/>
</dbReference>
<dbReference type="PROSITE" id="PS00478">
    <property type="entry name" value="LIM_DOMAIN_1"/>
    <property type="match status" value="2"/>
</dbReference>
<dbReference type="PROSITE" id="PS50023">
    <property type="entry name" value="LIM_DOMAIN_2"/>
    <property type="match status" value="3"/>
</dbReference>
<name>ZYX_XENTR</name>
<comment type="function">
    <text evidence="2 3">Adhesion plaque protein. May be a component of a signal transduction pathway that mediates adhesion-stimulated changes in gene expression. Suppresses the transcription-repressing activity of hesx1/anf1 (By similarity).</text>
</comment>
<comment type="subunit">
    <text evidence="1">Interacts (via LIM2 domain) with hesx1/anf1.</text>
</comment>
<comment type="subcellular location">
    <subcellularLocation>
        <location evidence="3 4">Cytoplasm</location>
    </subcellularLocation>
    <subcellularLocation>
        <location evidence="3 4">Cytoplasm</location>
        <location evidence="3 4">Cytoskeleton</location>
    </subcellularLocation>
    <subcellularLocation>
        <location evidence="1">Cell junction</location>
        <location evidence="1">Focal adhesion</location>
    </subcellularLocation>
    <text evidence="1">Associates with the actin cytoskeleton near the adhesion plaques. Enters the nucleus in the presence of hesx1 (By similarity).</text>
</comment>
<comment type="similarity">
    <text evidence="5">Belongs to the zyxin/ajuba family.</text>
</comment>
<feature type="chain" id="PRO_0000331488" description="Zyxin">
    <location>
        <begin position="1"/>
        <end position="674"/>
    </location>
</feature>
<feature type="domain" description="LIM zinc-binding 1" evidence="6">
    <location>
        <begin position="481"/>
        <end position="542"/>
    </location>
</feature>
<feature type="domain" description="LIM zinc-binding 2" evidence="6">
    <location>
        <begin position="543"/>
        <end position="600"/>
    </location>
</feature>
<feature type="domain" description="LIM zinc-binding 3" evidence="6">
    <location>
        <begin position="601"/>
        <end position="671"/>
    </location>
</feature>
<feature type="region of interest" description="Disordered" evidence="7">
    <location>
        <begin position="35"/>
        <end position="447"/>
    </location>
</feature>
<feature type="compositionally biased region" description="Pro residues" evidence="7">
    <location>
        <begin position="86"/>
        <end position="109"/>
    </location>
</feature>
<feature type="compositionally biased region" description="Low complexity" evidence="7">
    <location>
        <begin position="110"/>
        <end position="120"/>
    </location>
</feature>
<feature type="compositionally biased region" description="Pro residues" evidence="7">
    <location>
        <begin position="121"/>
        <end position="148"/>
    </location>
</feature>
<feature type="compositionally biased region" description="Pro residues" evidence="7">
    <location>
        <begin position="162"/>
        <end position="180"/>
    </location>
</feature>
<feature type="compositionally biased region" description="Pro residues" evidence="7">
    <location>
        <begin position="187"/>
        <end position="209"/>
    </location>
</feature>
<feature type="compositionally biased region" description="Pro residues" evidence="7">
    <location>
        <begin position="222"/>
        <end position="240"/>
    </location>
</feature>
<feature type="compositionally biased region" description="Pro residues" evidence="7">
    <location>
        <begin position="254"/>
        <end position="266"/>
    </location>
</feature>
<feature type="compositionally biased region" description="Basic and acidic residues" evidence="7">
    <location>
        <begin position="328"/>
        <end position="341"/>
    </location>
</feature>
<feature type="compositionally biased region" description="Basic and acidic residues" evidence="7">
    <location>
        <begin position="358"/>
        <end position="387"/>
    </location>
</feature>
<proteinExistence type="evidence at transcript level"/>
<sequence>MDPAAPAARMTSSFTINISTPSFYNPPKKFAPVVPPKPKVNPFRAAEEPVPQENSAGPGLRRAFVGKVGQIPSMAPPGGDPEDFVLPPPPPNEEPMSPPGSSFPPPPPSFGDDGPGSPLGLFPPPPPPEFSEPFPPPIEESFPSPPPLEEAAGLSDTQDPPASVPPPPPPLPSPPEPAPPVLCEAPKPAPVLPKPPPPSAFPKPEPPQSVAPKAQSSIFIPKPSPPSAVAPKPVAPPPVAAKPSGPGPFVGPSAAPPTHTPAPPAPAHTFSPKPVAGPTFAPKSASHTFMAKPSAPVFSPKAATEPPTEAPQERFPASQSSPKLTPAAKHEAPPPAAKHEAPPPASATRAPGFSFAQQRDKPRVLEKPRANVRDLVPEPPVETRGERTLGPQAEGGRSFGAQPIGGKDTKPLPEGLRNQTPDGTHRVGGQPGTHRPTPHQDQTSGSQGLNMKEVEELEMLTQQLMQEMDKPTPAAEAHTMELCGFCGRGLSRTETVVRAGEHLYHVTCFTCSKCEQQLQGQQYYESAGKPLCEECYQDTLECCAVCEKKITERLLRAIGQAYHPSCFTCAVCKCSLQGEPFIVDDNKLPHCVSDYHRRYAPRCTVCGDPIAPEPGRDETVRVVALEKNFHMMCYKCEDCGCPLSIEADDGGCFPLDGHVLCKKCHTVRARAALG</sequence>
<organism>
    <name type="scientific">Xenopus tropicalis</name>
    <name type="common">Western clawed frog</name>
    <name type="synonym">Silurana tropicalis</name>
    <dbReference type="NCBI Taxonomy" id="8364"/>
    <lineage>
        <taxon>Eukaryota</taxon>
        <taxon>Metazoa</taxon>
        <taxon>Chordata</taxon>
        <taxon>Craniata</taxon>
        <taxon>Vertebrata</taxon>
        <taxon>Euteleostomi</taxon>
        <taxon>Amphibia</taxon>
        <taxon>Batrachia</taxon>
        <taxon>Anura</taxon>
        <taxon>Pipoidea</taxon>
        <taxon>Pipidae</taxon>
        <taxon>Xenopodinae</taxon>
        <taxon>Xenopus</taxon>
        <taxon>Silurana</taxon>
    </lineage>
</organism>
<accession>Q0VA45</accession>
<reference evidence="8" key="1">
    <citation type="submission" date="2006-08" db="EMBL/GenBank/DDBJ databases">
        <authorList>
            <consortium name="NIH - Xenopus Gene Collection (XGC) project"/>
        </authorList>
    </citation>
    <scope>NUCLEOTIDE SEQUENCE [LARGE SCALE MRNA]</scope>
    <source>
        <tissue evidence="8">Brain</tissue>
    </source>
</reference>